<gene>
    <name evidence="1" type="primary">rimP</name>
    <name type="ordered locus">SPCG_0515</name>
</gene>
<keyword id="KW-0963">Cytoplasm</keyword>
<keyword id="KW-0690">Ribosome biogenesis</keyword>
<organism>
    <name type="scientific">Streptococcus pneumoniae (strain CGSP14)</name>
    <dbReference type="NCBI Taxonomy" id="516950"/>
    <lineage>
        <taxon>Bacteria</taxon>
        <taxon>Bacillati</taxon>
        <taxon>Bacillota</taxon>
        <taxon>Bacilli</taxon>
        <taxon>Lactobacillales</taxon>
        <taxon>Streptococcaceae</taxon>
        <taxon>Streptococcus</taxon>
    </lineage>
</organism>
<name>RIMP_STRPS</name>
<comment type="function">
    <text evidence="1">Required for maturation of 30S ribosomal subunits.</text>
</comment>
<comment type="subcellular location">
    <subcellularLocation>
        <location evidence="1">Cytoplasm</location>
    </subcellularLocation>
</comment>
<comment type="similarity">
    <text evidence="1">Belongs to the RimP family.</text>
</comment>
<comment type="sequence caution" evidence="2">
    <conflict type="erroneous initiation">
        <sequence resource="EMBL-CDS" id="ACB89767"/>
    </conflict>
</comment>
<accession>B2IME0</accession>
<dbReference type="EMBL" id="CP001033">
    <property type="protein sequence ID" value="ACB89767.1"/>
    <property type="status" value="ALT_INIT"/>
    <property type="molecule type" value="Genomic_DNA"/>
</dbReference>
<dbReference type="RefSeq" id="WP_001808916.1">
    <property type="nucleotide sequence ID" value="NC_010582.1"/>
</dbReference>
<dbReference type="SMR" id="B2IME0"/>
<dbReference type="KEGG" id="spw:SPCG_0515"/>
<dbReference type="HOGENOM" id="CLU_070525_2_0_9"/>
<dbReference type="GO" id="GO:0005829">
    <property type="term" value="C:cytosol"/>
    <property type="evidence" value="ECO:0007669"/>
    <property type="project" value="TreeGrafter"/>
</dbReference>
<dbReference type="GO" id="GO:0000028">
    <property type="term" value="P:ribosomal small subunit assembly"/>
    <property type="evidence" value="ECO:0007669"/>
    <property type="project" value="TreeGrafter"/>
</dbReference>
<dbReference type="GO" id="GO:0006412">
    <property type="term" value="P:translation"/>
    <property type="evidence" value="ECO:0007669"/>
    <property type="project" value="TreeGrafter"/>
</dbReference>
<dbReference type="CDD" id="cd01734">
    <property type="entry name" value="YlxS_C"/>
    <property type="match status" value="1"/>
</dbReference>
<dbReference type="Gene3D" id="2.30.30.180">
    <property type="entry name" value="Ribosome maturation factor RimP, C-terminal domain"/>
    <property type="match status" value="1"/>
</dbReference>
<dbReference type="Gene3D" id="3.30.300.70">
    <property type="entry name" value="RimP-like superfamily, N-terminal"/>
    <property type="match status" value="1"/>
</dbReference>
<dbReference type="HAMAP" id="MF_01077">
    <property type="entry name" value="RimP"/>
    <property type="match status" value="1"/>
</dbReference>
<dbReference type="InterPro" id="IPR003728">
    <property type="entry name" value="Ribosome_maturation_RimP"/>
</dbReference>
<dbReference type="InterPro" id="IPR028998">
    <property type="entry name" value="RimP_C"/>
</dbReference>
<dbReference type="InterPro" id="IPR036847">
    <property type="entry name" value="RimP_C_sf"/>
</dbReference>
<dbReference type="InterPro" id="IPR028989">
    <property type="entry name" value="RimP_N"/>
</dbReference>
<dbReference type="InterPro" id="IPR035956">
    <property type="entry name" value="RimP_N_sf"/>
</dbReference>
<dbReference type="NCBIfam" id="NF000928">
    <property type="entry name" value="PRK00092.1-2"/>
    <property type="match status" value="1"/>
</dbReference>
<dbReference type="PANTHER" id="PTHR33867">
    <property type="entry name" value="RIBOSOME MATURATION FACTOR RIMP"/>
    <property type="match status" value="1"/>
</dbReference>
<dbReference type="PANTHER" id="PTHR33867:SF1">
    <property type="entry name" value="RIBOSOME MATURATION FACTOR RIMP"/>
    <property type="match status" value="1"/>
</dbReference>
<dbReference type="Pfam" id="PF17384">
    <property type="entry name" value="DUF150_C"/>
    <property type="match status" value="1"/>
</dbReference>
<dbReference type="Pfam" id="PF02576">
    <property type="entry name" value="RimP_N"/>
    <property type="match status" value="1"/>
</dbReference>
<dbReference type="SUPFAM" id="SSF74942">
    <property type="entry name" value="YhbC-like, C-terminal domain"/>
    <property type="match status" value="1"/>
</dbReference>
<dbReference type="SUPFAM" id="SSF75420">
    <property type="entry name" value="YhbC-like, N-terminal domain"/>
    <property type="match status" value="1"/>
</dbReference>
<sequence length="159" mass="17764">MDAIATIVELVREVVEPVIEAPFELVDIEYGKIGSDMILSIFVDKPEGITLNDTADLTEMISPVLDTIKPDPFPEQYFLEITSPGLERPLKTKDAVAGAVGKYIHVGLYQAIDKQKVFEGTLLAFEEDELTMEYMDKTRKKTVQIPYSLVSKARLAVKL</sequence>
<evidence type="ECO:0000255" key="1">
    <source>
        <dbReference type="HAMAP-Rule" id="MF_01077"/>
    </source>
</evidence>
<evidence type="ECO:0000305" key="2"/>
<reference key="1">
    <citation type="journal article" date="2009" name="BMC Genomics">
        <title>Genome evolution driven by host adaptations results in a more virulent and antimicrobial-resistant Streptococcus pneumoniae serotype 14.</title>
        <authorList>
            <person name="Ding F."/>
            <person name="Tang P."/>
            <person name="Hsu M.-H."/>
            <person name="Cui P."/>
            <person name="Hu S."/>
            <person name="Yu J."/>
            <person name="Chiu C.-H."/>
        </authorList>
    </citation>
    <scope>NUCLEOTIDE SEQUENCE [LARGE SCALE GENOMIC DNA]</scope>
    <source>
        <strain>CGSP14</strain>
    </source>
</reference>
<proteinExistence type="inferred from homology"/>
<protein>
    <recommendedName>
        <fullName evidence="1">Ribosome maturation factor RimP</fullName>
    </recommendedName>
</protein>
<feature type="chain" id="PRO_0000384783" description="Ribosome maturation factor RimP">
    <location>
        <begin position="1"/>
        <end position="159"/>
    </location>
</feature>